<protein>
    <recommendedName>
        <fullName evidence="1">Arginine--tRNA ligase</fullName>
        <ecNumber evidence="1">6.1.1.19</ecNumber>
    </recommendedName>
    <alternativeName>
        <fullName evidence="1">Arginyl-tRNA synthetase</fullName>
        <shortName evidence="1">ArgRS</shortName>
    </alternativeName>
</protein>
<proteinExistence type="inferred from homology"/>
<feature type="chain" id="PRO_1000018053" description="Arginine--tRNA ligase">
    <location>
        <begin position="1"/>
        <end position="550"/>
    </location>
</feature>
<feature type="short sequence motif" description="'HIGH' region">
    <location>
        <begin position="125"/>
        <end position="135"/>
    </location>
</feature>
<gene>
    <name evidence="1" type="primary">argS</name>
    <name type="ordered locus">LI0229</name>
</gene>
<sequence length="550" mass="62127">MRAEQYLKTCLECTIKKLGYTWPKKAVIEIPQNTLHGDLATNIALVLANNIGINPKNIAEKIAEKLQQESTSFSSVSVAGPGFLNITFSPTFWQKTINHILSKGSSYGSCQLGNKQKVLIEYVSANPTGPLHIGHGRGAAIGDTLARLLRFTGYNVTTEYYINDAGRQMQLLGLSIWLRIKELSGIQVTWPEEYYKGTYIIEIAKALLEEQPDIISYTDIDGEQASFHFGMNVILNGIKQDLKTFKVEHEEWFSERTLIKTNAIEQTLKALECTGLTFEKEGALWFQSTVFGDDKDRVLRKSDKSLTYFALDIAYHYTKYNRGFDRIIDILGADHHGYIARIKAAMQAFGHDPMTFDIILIQLVSLLENGIQVAMSTRAGQFEKLIDVINEVGVDAARFMFLLRKSDAHLDFDLELVKQRTMNNPVYYVQYAYARICSIIRKAHDLGFTITDVNEVPLSNITTKDELNLLRLLDKFEDVIYNAAQHLAPHYITHYLMELAGELHSYYAKYPVLQSNEKTIVLSRLALLQAVGQVIYNALNILGVTAPKNM</sequence>
<accession>Q1MRU1</accession>
<comment type="catalytic activity">
    <reaction evidence="1">
        <text>tRNA(Arg) + L-arginine + ATP = L-arginyl-tRNA(Arg) + AMP + diphosphate</text>
        <dbReference type="Rhea" id="RHEA:20301"/>
        <dbReference type="Rhea" id="RHEA-COMP:9658"/>
        <dbReference type="Rhea" id="RHEA-COMP:9673"/>
        <dbReference type="ChEBI" id="CHEBI:30616"/>
        <dbReference type="ChEBI" id="CHEBI:32682"/>
        <dbReference type="ChEBI" id="CHEBI:33019"/>
        <dbReference type="ChEBI" id="CHEBI:78442"/>
        <dbReference type="ChEBI" id="CHEBI:78513"/>
        <dbReference type="ChEBI" id="CHEBI:456215"/>
        <dbReference type="EC" id="6.1.1.19"/>
    </reaction>
</comment>
<comment type="subunit">
    <text evidence="1">Monomer.</text>
</comment>
<comment type="subcellular location">
    <subcellularLocation>
        <location evidence="1">Cytoplasm</location>
    </subcellularLocation>
</comment>
<comment type="similarity">
    <text evidence="1">Belongs to the class-I aminoacyl-tRNA synthetase family.</text>
</comment>
<keyword id="KW-0030">Aminoacyl-tRNA synthetase</keyword>
<keyword id="KW-0067">ATP-binding</keyword>
<keyword id="KW-0963">Cytoplasm</keyword>
<keyword id="KW-0436">Ligase</keyword>
<keyword id="KW-0547">Nucleotide-binding</keyword>
<keyword id="KW-0648">Protein biosynthesis</keyword>
<keyword id="KW-1185">Reference proteome</keyword>
<evidence type="ECO:0000255" key="1">
    <source>
        <dbReference type="HAMAP-Rule" id="MF_00123"/>
    </source>
</evidence>
<dbReference type="EC" id="6.1.1.19" evidence="1"/>
<dbReference type="EMBL" id="AM180252">
    <property type="protein sequence ID" value="CAJ54285.1"/>
    <property type="molecule type" value="Genomic_DNA"/>
</dbReference>
<dbReference type="RefSeq" id="WP_011526311.1">
    <property type="nucleotide sequence ID" value="NC_008011.1"/>
</dbReference>
<dbReference type="SMR" id="Q1MRU1"/>
<dbReference type="STRING" id="363253.LI0229"/>
<dbReference type="KEGG" id="lip:LI0229"/>
<dbReference type="eggNOG" id="COG0018">
    <property type="taxonomic scope" value="Bacteria"/>
</dbReference>
<dbReference type="HOGENOM" id="CLU_006406_0_1_7"/>
<dbReference type="OrthoDB" id="9803211at2"/>
<dbReference type="Proteomes" id="UP000002430">
    <property type="component" value="Chromosome"/>
</dbReference>
<dbReference type="GO" id="GO:0005737">
    <property type="term" value="C:cytoplasm"/>
    <property type="evidence" value="ECO:0007669"/>
    <property type="project" value="UniProtKB-SubCell"/>
</dbReference>
<dbReference type="GO" id="GO:0004814">
    <property type="term" value="F:arginine-tRNA ligase activity"/>
    <property type="evidence" value="ECO:0007669"/>
    <property type="project" value="UniProtKB-UniRule"/>
</dbReference>
<dbReference type="GO" id="GO:0005524">
    <property type="term" value="F:ATP binding"/>
    <property type="evidence" value="ECO:0007669"/>
    <property type="project" value="UniProtKB-UniRule"/>
</dbReference>
<dbReference type="GO" id="GO:0006420">
    <property type="term" value="P:arginyl-tRNA aminoacylation"/>
    <property type="evidence" value="ECO:0007669"/>
    <property type="project" value="UniProtKB-UniRule"/>
</dbReference>
<dbReference type="CDD" id="cd00671">
    <property type="entry name" value="ArgRS_core"/>
    <property type="match status" value="1"/>
</dbReference>
<dbReference type="FunFam" id="1.10.730.10:FF:000008">
    <property type="entry name" value="Arginine--tRNA ligase"/>
    <property type="match status" value="1"/>
</dbReference>
<dbReference type="FunFam" id="3.40.50.620:FF:000062">
    <property type="entry name" value="Arginine--tRNA ligase"/>
    <property type="match status" value="1"/>
</dbReference>
<dbReference type="Gene3D" id="3.30.1360.70">
    <property type="entry name" value="Arginyl tRNA synthetase N-terminal domain"/>
    <property type="match status" value="1"/>
</dbReference>
<dbReference type="Gene3D" id="3.40.50.620">
    <property type="entry name" value="HUPs"/>
    <property type="match status" value="1"/>
</dbReference>
<dbReference type="Gene3D" id="1.10.730.10">
    <property type="entry name" value="Isoleucyl-tRNA Synthetase, Domain 1"/>
    <property type="match status" value="1"/>
</dbReference>
<dbReference type="HAMAP" id="MF_00123">
    <property type="entry name" value="Arg_tRNA_synth"/>
    <property type="match status" value="1"/>
</dbReference>
<dbReference type="InterPro" id="IPR001412">
    <property type="entry name" value="aa-tRNA-synth_I_CS"/>
</dbReference>
<dbReference type="InterPro" id="IPR001278">
    <property type="entry name" value="Arg-tRNA-ligase"/>
</dbReference>
<dbReference type="InterPro" id="IPR005148">
    <property type="entry name" value="Arg-tRNA-synth_N"/>
</dbReference>
<dbReference type="InterPro" id="IPR036695">
    <property type="entry name" value="Arg-tRNA-synth_N_sf"/>
</dbReference>
<dbReference type="InterPro" id="IPR035684">
    <property type="entry name" value="ArgRS_core"/>
</dbReference>
<dbReference type="InterPro" id="IPR008909">
    <property type="entry name" value="DALR_anticod-bd"/>
</dbReference>
<dbReference type="InterPro" id="IPR014729">
    <property type="entry name" value="Rossmann-like_a/b/a_fold"/>
</dbReference>
<dbReference type="InterPro" id="IPR009080">
    <property type="entry name" value="tRNAsynth_Ia_anticodon-bd"/>
</dbReference>
<dbReference type="NCBIfam" id="TIGR00456">
    <property type="entry name" value="argS"/>
    <property type="match status" value="1"/>
</dbReference>
<dbReference type="PANTHER" id="PTHR11956:SF5">
    <property type="entry name" value="ARGININE--TRNA LIGASE, CYTOPLASMIC"/>
    <property type="match status" value="1"/>
</dbReference>
<dbReference type="PANTHER" id="PTHR11956">
    <property type="entry name" value="ARGINYL-TRNA SYNTHETASE"/>
    <property type="match status" value="1"/>
</dbReference>
<dbReference type="Pfam" id="PF03485">
    <property type="entry name" value="Arg_tRNA_synt_N"/>
    <property type="match status" value="1"/>
</dbReference>
<dbReference type="Pfam" id="PF05746">
    <property type="entry name" value="DALR_1"/>
    <property type="match status" value="1"/>
</dbReference>
<dbReference type="Pfam" id="PF00750">
    <property type="entry name" value="tRNA-synt_1d"/>
    <property type="match status" value="1"/>
</dbReference>
<dbReference type="PRINTS" id="PR01038">
    <property type="entry name" value="TRNASYNTHARG"/>
</dbReference>
<dbReference type="SMART" id="SM01016">
    <property type="entry name" value="Arg_tRNA_synt_N"/>
    <property type="match status" value="1"/>
</dbReference>
<dbReference type="SMART" id="SM00836">
    <property type="entry name" value="DALR_1"/>
    <property type="match status" value="1"/>
</dbReference>
<dbReference type="SUPFAM" id="SSF47323">
    <property type="entry name" value="Anticodon-binding domain of a subclass of class I aminoacyl-tRNA synthetases"/>
    <property type="match status" value="1"/>
</dbReference>
<dbReference type="SUPFAM" id="SSF55190">
    <property type="entry name" value="Arginyl-tRNA synthetase (ArgRS), N-terminal 'additional' domain"/>
    <property type="match status" value="1"/>
</dbReference>
<dbReference type="SUPFAM" id="SSF52374">
    <property type="entry name" value="Nucleotidylyl transferase"/>
    <property type="match status" value="1"/>
</dbReference>
<dbReference type="PROSITE" id="PS00178">
    <property type="entry name" value="AA_TRNA_LIGASE_I"/>
    <property type="match status" value="1"/>
</dbReference>
<reference key="1">
    <citation type="submission" date="2005-11" db="EMBL/GenBank/DDBJ databases">
        <title>The complete genome sequence of Lawsonia intracellularis: the causative agent of proliferative enteropathy.</title>
        <authorList>
            <person name="Kaur K."/>
            <person name="Zhang Q."/>
            <person name="Beckler D."/>
            <person name="Munir S."/>
            <person name="Li L."/>
            <person name="Kinsley K."/>
            <person name="Herron L."/>
            <person name="Peterson A."/>
            <person name="May B."/>
            <person name="Singh S."/>
            <person name="Gebhart C."/>
            <person name="Kapur V."/>
        </authorList>
    </citation>
    <scope>NUCLEOTIDE SEQUENCE [LARGE SCALE GENOMIC DNA]</scope>
    <source>
        <strain>PHE/MN1-00</strain>
    </source>
</reference>
<organism>
    <name type="scientific">Lawsonia intracellularis (strain PHE/MN1-00)</name>
    <dbReference type="NCBI Taxonomy" id="363253"/>
    <lineage>
        <taxon>Bacteria</taxon>
        <taxon>Pseudomonadati</taxon>
        <taxon>Thermodesulfobacteriota</taxon>
        <taxon>Desulfovibrionia</taxon>
        <taxon>Desulfovibrionales</taxon>
        <taxon>Desulfovibrionaceae</taxon>
        <taxon>Lawsonia</taxon>
    </lineage>
</organism>
<name>SYR_LAWIP</name>